<sequence length="969" mass="108621">MAADSDPESEVFEITDFTTASEWERFISRVEEVLNDWKLIGSRVGKPLEKGEYTSGTWEESSQEISFADFKFSITHHYLKQESAENDGRDELEEDAYPLAMQDLLCINNDFPPRAHCLVRWFGVREFVVISPGANCEAIISESKCSLLLSSVSIALANTGCQVPLFVQIQQKHRKMFSGECQGPGVRSDFEMVHLRRVPSQYNHLSGLLDIFKNKIGCPLTPLPPINISIRFTYVLQDWQQCSWPQQPPDFDALLAGEVGGVEFGKLPFGACEDPISELHLAATWPSLTEGIVVDNDVYSDLDPLQAPHWSVRVRTAENPQCLLGEFLTEFFKICCRKETTEEILGRSTAEEEGKENSDITQALSKLTEPSTAVPIHKLSVSSMVHSARKRIRRHRRVPESPLNNDVLNSILLYLFPDAALDKADVSEVRPPQQSPDRQSEDYHLYNQLKSCPSDSLTHRLALCICMVNFHHGGVRAVAHLWQEFVLEMRYRWENNCLIYGLASGPPDLRCCLLHQKLQMLNCCIERKKARDDGKKSSSSDGARDRSRGAPEGAGPEGAGPAEAAGKSWDSWSDSEDEFFECVSDTEEMKEDKEEAENRSRSKPEGRLQPHGTHTLLNTQEPLYIPITQEPAPMTEDLLEEQSEVLAKLGTSAEGAHLRARMQSACLLSDMESFKAANPGCTLLDFVRWYSPRDYVEEQVTDADGRVEVRGELSARMKIPGNMWVEAWETARATPARRQKRLFDDTKEAEKVLHYLALQKPSELTRHLLPCVLHAALLKIKEEESAEDLPSVRSSLQQISSSASKILRHPNPEFKKLEDVISQLMAVEAVIARARSLKAKFGVCGGEREREEDGDELERFVSSLLEEPEVCVSGAGRGPAGNVIHKLFVSSQRAALLAPMEEETLRSGGSDDRKAFPDFPPPAGREILLRTCVPRPAPYSKALPQRLFCVLMRDEFRLAGAFSSDTSFF</sequence>
<gene>
    <name type="primary">rab3gap1</name>
    <name type="synonym">rab3gap</name>
    <name type="ORF">wu:fj56a04</name>
</gene>
<comment type="function">
    <text evidence="2">Catalytic subunit of the Rab3 GTPase-activating (Rab3GAP) complex composed of rab3gap1 and rab3gap2, which has GTPase-activating protein (GAP) activity towards various Rab3 subfamily members (RAB3A, RAB3B, RAB3C and RAB3D), RAB5A and RAB43, and guanine nucleotide exchange factor (GEF) activity towards RAB18. As part of the Rab3GAP complex, acts as a GAP for Rab3 proteins by converting active RAB3-GTP to the inactive form RAB3-GDP. Rab3 proteins are involved in regulated exocytosis of neurotransmitters and hormones. The Rab3GAP complex, acts as a GEF for RAB18 by promoting the conversion of inactive RAB18-GDP to the active form RAB18-GTP. Recruits and stabilizes RAB18 at the cis-Golgi membrane where RAB18 is most likely activated. Also involved in RAB18 recruitment at the endoplasmic reticulum (ER) membrane where it maintains proper ER structure. Required for normal eye and brain development. May participate in neurodevelopmental processes such as proliferation, migration and differentiation before synapse formation, and non-synaptic vesicular release of neurotransmitters.</text>
</comment>
<comment type="subunit">
    <text evidence="1 2">The Rab3 GTPase-activating complex is a heterodimer composed of rab3gap1 and rab3gap2 (By similarity). The Rab3 GTPase-activating complex interacts with DMXL2 (By similarity). Interacts with LMAN1 (By similarity).</text>
</comment>
<comment type="subcellular location">
    <subcellularLocation>
        <location evidence="2">Cytoplasm</location>
    </subcellularLocation>
    <subcellularLocation>
        <location evidence="2">Endoplasmic reticulum</location>
    </subcellularLocation>
    <subcellularLocation>
        <location evidence="2">Golgi apparatus</location>
        <location evidence="2">cis-Golgi network</location>
    </subcellularLocation>
    <text evidence="2">In neurons, it is enriched in the synaptic soluble fraction.</text>
</comment>
<comment type="similarity">
    <text evidence="4">Belongs to the Rab3-GAP catalytic subunit family.</text>
</comment>
<name>RB3GP_DANRE</name>
<keyword id="KW-0963">Cytoplasm</keyword>
<keyword id="KW-0256">Endoplasmic reticulum</keyword>
<keyword id="KW-0333">Golgi apparatus</keyword>
<keyword id="KW-0343">GTPase activation</keyword>
<keyword id="KW-1185">Reference proteome</keyword>
<evidence type="ECO:0000250" key="1">
    <source>
        <dbReference type="UniProtKB" id="P69735"/>
    </source>
</evidence>
<evidence type="ECO:0000250" key="2">
    <source>
        <dbReference type="UniProtKB" id="Q15042"/>
    </source>
</evidence>
<evidence type="ECO:0000256" key="3">
    <source>
        <dbReference type="SAM" id="MobiDB-lite"/>
    </source>
</evidence>
<evidence type="ECO:0000305" key="4"/>
<protein>
    <recommendedName>
        <fullName>Rab3 GTPase-activating protein catalytic subunit</fullName>
    </recommendedName>
</protein>
<feature type="chain" id="PRO_0000191658" description="Rab3 GTPase-activating protein catalytic subunit">
    <location>
        <begin position="1"/>
        <end position="969"/>
    </location>
</feature>
<feature type="region of interest" description="Disordered" evidence="3">
    <location>
        <begin position="532"/>
        <end position="613"/>
    </location>
</feature>
<feature type="compositionally biased region" description="Basic and acidic residues" evidence="3">
    <location>
        <begin position="532"/>
        <end position="549"/>
    </location>
</feature>
<feature type="compositionally biased region" description="Low complexity" evidence="3">
    <location>
        <begin position="550"/>
        <end position="572"/>
    </location>
</feature>
<feature type="compositionally biased region" description="Acidic residues" evidence="3">
    <location>
        <begin position="573"/>
        <end position="589"/>
    </location>
</feature>
<feature type="compositionally biased region" description="Basic and acidic residues" evidence="3">
    <location>
        <begin position="590"/>
        <end position="608"/>
    </location>
</feature>
<reference key="1">
    <citation type="submission" date="2004-04" db="EMBL/GenBank/DDBJ databases">
        <authorList>
            <consortium name="NIH - Zebrafish Gene Collection (ZGC) project"/>
        </authorList>
    </citation>
    <scope>NUCLEOTIDE SEQUENCE [LARGE SCALE MRNA] OF 2-969</scope>
    <source>
        <tissue>Embryo</tissue>
    </source>
</reference>
<organism>
    <name type="scientific">Danio rerio</name>
    <name type="common">Zebrafish</name>
    <name type="synonym">Brachydanio rerio</name>
    <dbReference type="NCBI Taxonomy" id="7955"/>
    <lineage>
        <taxon>Eukaryota</taxon>
        <taxon>Metazoa</taxon>
        <taxon>Chordata</taxon>
        <taxon>Craniata</taxon>
        <taxon>Vertebrata</taxon>
        <taxon>Euteleostomi</taxon>
        <taxon>Actinopterygii</taxon>
        <taxon>Neopterygii</taxon>
        <taxon>Teleostei</taxon>
        <taxon>Ostariophysi</taxon>
        <taxon>Cypriniformes</taxon>
        <taxon>Danionidae</taxon>
        <taxon>Danioninae</taxon>
        <taxon>Danio</taxon>
    </lineage>
</organism>
<dbReference type="EMBL" id="BC068420">
    <property type="protein sequence ID" value="AAH68420.1"/>
    <property type="molecule type" value="mRNA"/>
</dbReference>
<dbReference type="RefSeq" id="NP_001071256.2">
    <property type="nucleotide sequence ID" value="NM_001077788.2"/>
</dbReference>
<dbReference type="FunCoup" id="Q6NUV0">
    <property type="interactions" value="786"/>
</dbReference>
<dbReference type="STRING" id="7955.ENSDARP00000132110"/>
<dbReference type="PaxDb" id="7955-ENSDARP00000108106"/>
<dbReference type="GeneID" id="777744"/>
<dbReference type="KEGG" id="dre:777744"/>
<dbReference type="AGR" id="ZFIN:ZDB-GENE-061027-53"/>
<dbReference type="CTD" id="22930"/>
<dbReference type="ZFIN" id="ZDB-GENE-061027-53">
    <property type="gene designation" value="rab3gap1"/>
</dbReference>
<dbReference type="eggNOG" id="KOG2390">
    <property type="taxonomic scope" value="Eukaryota"/>
</dbReference>
<dbReference type="InParanoid" id="Q6NUV0"/>
<dbReference type="OrthoDB" id="17346at2759"/>
<dbReference type="PhylomeDB" id="Q6NUV0"/>
<dbReference type="PRO" id="PR:Q6NUV0"/>
<dbReference type="Proteomes" id="UP000000437">
    <property type="component" value="Chromosome 9"/>
</dbReference>
<dbReference type="GO" id="GO:0005801">
    <property type="term" value="C:cis-Golgi network"/>
    <property type="evidence" value="ECO:0000250"/>
    <property type="project" value="UniProtKB"/>
</dbReference>
<dbReference type="GO" id="GO:0005783">
    <property type="term" value="C:endoplasmic reticulum"/>
    <property type="evidence" value="ECO:0007669"/>
    <property type="project" value="UniProtKB-SubCell"/>
</dbReference>
<dbReference type="GO" id="GO:0005096">
    <property type="term" value="F:GTPase activator activity"/>
    <property type="evidence" value="ECO:0000318"/>
    <property type="project" value="GO_Central"/>
</dbReference>
<dbReference type="GO" id="GO:0005085">
    <property type="term" value="F:guanyl-nucleotide exchange factor activity"/>
    <property type="evidence" value="ECO:0000250"/>
    <property type="project" value="UniProtKB"/>
</dbReference>
<dbReference type="GO" id="GO:0007420">
    <property type="term" value="P:brain development"/>
    <property type="evidence" value="ECO:0000318"/>
    <property type="project" value="GO_Central"/>
</dbReference>
<dbReference type="GO" id="GO:2000786">
    <property type="term" value="P:positive regulation of autophagosome assembly"/>
    <property type="evidence" value="ECO:0000318"/>
    <property type="project" value="GO_Central"/>
</dbReference>
<dbReference type="InterPro" id="IPR045700">
    <property type="entry name" value="Rab3GAP1"/>
</dbReference>
<dbReference type="InterPro" id="IPR045698">
    <property type="entry name" value="Rab3GAP1_C"/>
</dbReference>
<dbReference type="InterPro" id="IPR026147">
    <property type="entry name" value="Rab3GAP1_conserved"/>
</dbReference>
<dbReference type="PANTHER" id="PTHR21422">
    <property type="entry name" value="RAB3 GTPASE-ACTIVATING PROTEIN CATALYTIC SUBUNIT"/>
    <property type="match status" value="1"/>
</dbReference>
<dbReference type="PANTHER" id="PTHR21422:SF9">
    <property type="entry name" value="RAB3 GTPASE-ACTIVATING PROTEIN CATALYTIC SUBUNIT"/>
    <property type="match status" value="1"/>
</dbReference>
<dbReference type="Pfam" id="PF19533">
    <property type="entry name" value="Rab3-GAP_cat_C"/>
    <property type="match status" value="1"/>
</dbReference>
<dbReference type="Pfam" id="PF13890">
    <property type="entry name" value="Rab3-GTPase_cat"/>
    <property type="match status" value="1"/>
</dbReference>
<accession>Q6NUV0</accession>
<proteinExistence type="evidence at transcript level"/>